<comment type="function">
    <text evidence="1">May be involved in telomere capping.</text>
</comment>
<comment type="subcellular location">
    <subcellularLocation>
        <location evidence="4">Membrane</location>
        <topology evidence="4">Single-pass type I membrane protein</topology>
    </subcellularLocation>
</comment>
<comment type="similarity">
    <text evidence="4">Belongs to the MTC6 family.</text>
</comment>
<feature type="signal peptide" evidence="2">
    <location>
        <begin position="1"/>
        <end position="22"/>
    </location>
</feature>
<feature type="chain" id="PRO_0000407777" description="Maintenance of telomere capping protein 6">
    <location>
        <begin position="23"/>
        <end position="617"/>
    </location>
</feature>
<feature type="topological domain" description="Extracellular" evidence="2">
    <location>
        <begin position="23"/>
        <end position="561"/>
    </location>
</feature>
<feature type="transmembrane region" description="Helical" evidence="2">
    <location>
        <begin position="562"/>
        <end position="582"/>
    </location>
</feature>
<feature type="topological domain" description="Cytoplasmic" evidence="2">
    <location>
        <begin position="583"/>
        <end position="617"/>
    </location>
</feature>
<feature type="region of interest" description="Disordered" evidence="3">
    <location>
        <begin position="409"/>
        <end position="435"/>
    </location>
</feature>
<feature type="compositionally biased region" description="Acidic residues" evidence="3">
    <location>
        <begin position="416"/>
        <end position="431"/>
    </location>
</feature>
<feature type="glycosylation site" description="N-linked (GlcNAc...) asparagine" evidence="2">
    <location>
        <position position="113"/>
    </location>
</feature>
<feature type="glycosylation site" description="N-linked (GlcNAc...) asparagine" evidence="2">
    <location>
        <position position="179"/>
    </location>
</feature>
<feature type="glycosylation site" description="N-linked (GlcNAc...) asparagine" evidence="2">
    <location>
        <position position="204"/>
    </location>
</feature>
<feature type="glycosylation site" description="N-linked (GlcNAc...) asparagine" evidence="2">
    <location>
        <position position="208"/>
    </location>
</feature>
<feature type="glycosylation site" description="N-linked (GlcNAc...) asparagine" evidence="2">
    <location>
        <position position="242"/>
    </location>
</feature>
<feature type="glycosylation site" description="N-linked (GlcNAc...) asparagine" evidence="2">
    <location>
        <position position="279"/>
    </location>
</feature>
<feature type="glycosylation site" description="N-linked (GlcNAc...) asparagine" evidence="2">
    <location>
        <position position="327"/>
    </location>
</feature>
<feature type="glycosylation site" description="N-linked (GlcNAc...) asparagine" evidence="2">
    <location>
        <position position="341"/>
    </location>
</feature>
<feature type="glycosylation site" description="N-linked (GlcNAc...) asparagine" evidence="2">
    <location>
        <position position="347"/>
    </location>
</feature>
<feature type="glycosylation site" description="N-linked (GlcNAc...) asparagine" evidence="2">
    <location>
        <position position="363"/>
    </location>
</feature>
<feature type="glycosylation site" description="N-linked (GlcNAc...) asparagine" evidence="2">
    <location>
        <position position="411"/>
    </location>
</feature>
<feature type="glycosylation site" description="N-linked (GlcNAc...) asparagine" evidence="2">
    <location>
        <position position="524"/>
    </location>
</feature>
<accession>Q6BW46</accession>
<protein>
    <recommendedName>
        <fullName>Maintenance of telomere capping protein 6</fullName>
    </recommendedName>
</protein>
<sequence length="617" mass="69783">MISYTYITALSILVLNVLNVACTSVDDWPNLSPQIEIALRSQRDIGKYISIDQVTGMGVSLNTLVFDKDGYTLDALNDVSTLLDVGVQTLMINLYWNEFTQKWQLCPAPFPANISSDITTSKELYWDGRTYKCEASLTVDSLVRTINTYLAETNTNIKVNMVHLLFHLKSIRIDPPSGNVSSSEIKDYISTFQPTDSHFVALNNATLNDTVSSFGTSLFTPSDLSSYRKSNYRKGDKVGFYNETRKSFPNLNTFLLLDYKRVMTTVIANDLVKSQYTYNVTSSDKKSVFLEGSGVDTTVASLSDPDAVSQCNELIHYNQDNIEVFDNISLKEHFRIVVDDNGTSFTNVTFSDFVRCGFSPILNASYYNVYNDEEGVSEIDGSLSDIVDNFIPLSFWSWAENQLIEPNRGLNISDSTDTDNDEERDDNDNDDPLVRRDMDYKSSHTAFKCVVLDENGWKVSDCYSRQPIACQKSGSPNDWHIDVKTKREYFTAYKDDSCPDDYNFGIPSSSIEMLALMSYIERENISYPVWIDMNDITVPDCFVTGGPYATCPYQMTVTRLKLAGLIAPSFIVAVVILALILCEKIFRTNPIQSNRKRHWKKAINKYVEKYDYEGVPS</sequence>
<reference key="1">
    <citation type="journal article" date="2004" name="Nature">
        <title>Genome evolution in yeasts.</title>
        <authorList>
            <person name="Dujon B."/>
            <person name="Sherman D."/>
            <person name="Fischer G."/>
            <person name="Durrens P."/>
            <person name="Casaregola S."/>
            <person name="Lafontaine I."/>
            <person name="de Montigny J."/>
            <person name="Marck C."/>
            <person name="Neuveglise C."/>
            <person name="Talla E."/>
            <person name="Goffard N."/>
            <person name="Frangeul L."/>
            <person name="Aigle M."/>
            <person name="Anthouard V."/>
            <person name="Babour A."/>
            <person name="Barbe V."/>
            <person name="Barnay S."/>
            <person name="Blanchin S."/>
            <person name="Beckerich J.-M."/>
            <person name="Beyne E."/>
            <person name="Bleykasten C."/>
            <person name="Boisrame A."/>
            <person name="Boyer J."/>
            <person name="Cattolico L."/>
            <person name="Confanioleri F."/>
            <person name="de Daruvar A."/>
            <person name="Despons L."/>
            <person name="Fabre E."/>
            <person name="Fairhead C."/>
            <person name="Ferry-Dumazet H."/>
            <person name="Groppi A."/>
            <person name="Hantraye F."/>
            <person name="Hennequin C."/>
            <person name="Jauniaux N."/>
            <person name="Joyet P."/>
            <person name="Kachouri R."/>
            <person name="Kerrest A."/>
            <person name="Koszul R."/>
            <person name="Lemaire M."/>
            <person name="Lesur I."/>
            <person name="Ma L."/>
            <person name="Muller H."/>
            <person name="Nicaud J.-M."/>
            <person name="Nikolski M."/>
            <person name="Oztas S."/>
            <person name="Ozier-Kalogeropoulos O."/>
            <person name="Pellenz S."/>
            <person name="Potier S."/>
            <person name="Richard G.-F."/>
            <person name="Straub M.-L."/>
            <person name="Suleau A."/>
            <person name="Swennen D."/>
            <person name="Tekaia F."/>
            <person name="Wesolowski-Louvel M."/>
            <person name="Westhof E."/>
            <person name="Wirth B."/>
            <person name="Zeniou-Meyer M."/>
            <person name="Zivanovic Y."/>
            <person name="Bolotin-Fukuhara M."/>
            <person name="Thierry A."/>
            <person name="Bouchier C."/>
            <person name="Caudron B."/>
            <person name="Scarpelli C."/>
            <person name="Gaillardin C."/>
            <person name="Weissenbach J."/>
            <person name="Wincker P."/>
            <person name="Souciet J.-L."/>
        </authorList>
    </citation>
    <scope>NUCLEOTIDE SEQUENCE [LARGE SCALE GENOMIC DNA]</scope>
    <source>
        <strain>ATCC 36239 / CBS 767 / BCRC 21394 / JCM 1990 / NBRC 0083 / IGC 2968</strain>
    </source>
</reference>
<gene>
    <name type="primary">MTC6</name>
    <name type="ordered locus">DEHA2B14432g</name>
</gene>
<name>MTC6_DEBHA</name>
<keyword id="KW-0325">Glycoprotein</keyword>
<keyword id="KW-0472">Membrane</keyword>
<keyword id="KW-1185">Reference proteome</keyword>
<keyword id="KW-0732">Signal</keyword>
<keyword id="KW-0812">Transmembrane</keyword>
<keyword id="KW-1133">Transmembrane helix</keyword>
<evidence type="ECO:0000250" key="1"/>
<evidence type="ECO:0000255" key="2"/>
<evidence type="ECO:0000256" key="3">
    <source>
        <dbReference type="SAM" id="MobiDB-lite"/>
    </source>
</evidence>
<evidence type="ECO:0000305" key="4"/>
<proteinExistence type="inferred from homology"/>
<dbReference type="EMBL" id="CR382134">
    <property type="protein sequence ID" value="CAG85584.2"/>
    <property type="molecule type" value="Genomic_DNA"/>
</dbReference>
<dbReference type="RefSeq" id="XP_457573.2">
    <property type="nucleotide sequence ID" value="XM_457573.1"/>
</dbReference>
<dbReference type="FunCoup" id="Q6BW46">
    <property type="interactions" value="16"/>
</dbReference>
<dbReference type="STRING" id="284592.Q6BW46"/>
<dbReference type="GlyCosmos" id="Q6BW46">
    <property type="glycosylation" value="12 sites, No reported glycans"/>
</dbReference>
<dbReference type="GeneID" id="2913536"/>
<dbReference type="KEGG" id="dha:DEHA2B14432g"/>
<dbReference type="VEuPathDB" id="FungiDB:DEHA2B14432g"/>
<dbReference type="eggNOG" id="ENOG502QVFP">
    <property type="taxonomic scope" value="Eukaryota"/>
</dbReference>
<dbReference type="HOGENOM" id="CLU_033723_0_0_1"/>
<dbReference type="InParanoid" id="Q6BW46"/>
<dbReference type="OMA" id="WGTIDPQ"/>
<dbReference type="OrthoDB" id="5573651at2759"/>
<dbReference type="Proteomes" id="UP000000599">
    <property type="component" value="Chromosome B"/>
</dbReference>
<dbReference type="GO" id="GO:0016020">
    <property type="term" value="C:membrane"/>
    <property type="evidence" value="ECO:0007669"/>
    <property type="project" value="UniProtKB-SubCell"/>
</dbReference>
<dbReference type="InterPro" id="IPR051008">
    <property type="entry name" value="Telomere_Capping_Maintenance"/>
</dbReference>
<dbReference type="PANTHER" id="PTHR35518:SF2">
    <property type="entry name" value="MAINTENANCE OF TELOMERE CAPPING PROTEIN 6"/>
    <property type="match status" value="1"/>
</dbReference>
<dbReference type="PANTHER" id="PTHR35518">
    <property type="entry name" value="MAINTENANCE OF TELOMOERE CAPPING"/>
    <property type="match status" value="1"/>
</dbReference>
<dbReference type="Pfam" id="PF25506">
    <property type="entry name" value="TIM-barrel_MTC6"/>
    <property type="match status" value="1"/>
</dbReference>
<organism>
    <name type="scientific">Debaryomyces hansenii (strain ATCC 36239 / CBS 767 / BCRC 21394 / JCM 1990 / NBRC 0083 / IGC 2968)</name>
    <name type="common">Yeast</name>
    <name type="synonym">Torulaspora hansenii</name>
    <dbReference type="NCBI Taxonomy" id="284592"/>
    <lineage>
        <taxon>Eukaryota</taxon>
        <taxon>Fungi</taxon>
        <taxon>Dikarya</taxon>
        <taxon>Ascomycota</taxon>
        <taxon>Saccharomycotina</taxon>
        <taxon>Pichiomycetes</taxon>
        <taxon>Debaryomycetaceae</taxon>
        <taxon>Debaryomyces</taxon>
    </lineage>
</organism>